<protein>
    <recommendedName>
        <fullName>Uncharacterized protein in mucB 3'region</fullName>
    </recommendedName>
</protein>
<sequence>MCIAQYIYVRLAVNLPTPETYDELQRAYDFFNEKLFSNELPPCLITLQREKRTYGYCSFKRFVGRESGYTVDEI</sequence>
<keyword id="KW-0614">Plasmid</keyword>
<reference key="1">
    <citation type="submission" date="1989-09" db="EMBL/GenBank/DDBJ databases">
        <authorList>
            <person name="Hall R.M."/>
            <person name="Vockler C."/>
        </authorList>
    </citation>
    <scope>NUCLEOTIDE SEQUENCE [GENOMIC DNA]</scope>
</reference>
<geneLocation type="plasmid">
    <name>IncN R46</name>
</geneLocation>
<dbReference type="EMBL" id="X16596">
    <property type="protein sequence ID" value="CAA34608.1"/>
    <property type="molecule type" value="Genomic_DNA"/>
</dbReference>
<dbReference type="PIR" id="S06777">
    <property type="entry name" value="S06777"/>
</dbReference>
<proteinExistence type="predicted"/>
<feature type="chain" id="PRO_0000068605" description="Uncharacterized protein in mucB 3'region">
    <location>
        <begin position="1"/>
        <end position="74" status="greater than"/>
    </location>
</feature>
<feature type="non-terminal residue">
    <location>
        <position position="74"/>
    </location>
</feature>
<name>YMUC_SALTM</name>
<accession>P14500</accession>
<organism>
    <name type="scientific">Salmonella typhimurium</name>
    <dbReference type="NCBI Taxonomy" id="90371"/>
    <lineage>
        <taxon>Bacteria</taxon>
        <taxon>Pseudomonadati</taxon>
        <taxon>Pseudomonadota</taxon>
        <taxon>Gammaproteobacteria</taxon>
        <taxon>Enterobacterales</taxon>
        <taxon>Enterobacteriaceae</taxon>
        <taxon>Salmonella</taxon>
    </lineage>
</organism>